<accession>Q9FKH1</accession>
<accession>Q9ZRQ7</accession>
<dbReference type="EMBL" id="AJ223125">
    <property type="protein sequence ID" value="CAA11128.1"/>
    <property type="molecule type" value="mRNA"/>
</dbReference>
<dbReference type="EMBL" id="AB011485">
    <property type="protein sequence ID" value="BAB09276.1"/>
    <property type="molecule type" value="Genomic_DNA"/>
</dbReference>
<dbReference type="EMBL" id="CP002688">
    <property type="protein sequence ID" value="AED94017.1"/>
    <property type="molecule type" value="Genomic_DNA"/>
</dbReference>
<dbReference type="PIR" id="T51368">
    <property type="entry name" value="T51368"/>
</dbReference>
<dbReference type="RefSeq" id="NP_198426.1">
    <property type="nucleotide sequence ID" value="NM_122968.2"/>
</dbReference>
<dbReference type="BioGRID" id="18809">
    <property type="interactions" value="15"/>
</dbReference>
<dbReference type="FunCoup" id="Q9FKH1">
    <property type="interactions" value="2"/>
</dbReference>
<dbReference type="IntAct" id="Q9FKH1">
    <property type="interactions" value="8"/>
</dbReference>
<dbReference type="STRING" id="3702.Q9FKH1"/>
<dbReference type="PaxDb" id="3702-AT5G35770.1"/>
<dbReference type="ProteomicsDB" id="226646"/>
<dbReference type="EnsemblPlants" id="AT5G35770.1">
    <property type="protein sequence ID" value="AT5G35770.1"/>
    <property type="gene ID" value="AT5G35770"/>
</dbReference>
<dbReference type="GeneID" id="833556"/>
<dbReference type="Gramene" id="AT5G35770.1">
    <property type="protein sequence ID" value="AT5G35770.1"/>
    <property type="gene ID" value="AT5G35770"/>
</dbReference>
<dbReference type="KEGG" id="ath:AT5G35770"/>
<dbReference type="Araport" id="AT5G35770"/>
<dbReference type="TAIR" id="AT5G35770">
    <property type="gene designation" value="SAP"/>
</dbReference>
<dbReference type="eggNOG" id="ENOG502QPKU">
    <property type="taxonomic scope" value="Eukaryota"/>
</dbReference>
<dbReference type="HOGENOM" id="CLU_614456_0_0_1"/>
<dbReference type="InParanoid" id="Q9FKH1"/>
<dbReference type="OMA" id="WRIMVID"/>
<dbReference type="PhylomeDB" id="Q9FKH1"/>
<dbReference type="PRO" id="PR:Q9FKH1"/>
<dbReference type="Proteomes" id="UP000006548">
    <property type="component" value="Chromosome 5"/>
</dbReference>
<dbReference type="ExpressionAtlas" id="Q9FKH1">
    <property type="expression patterns" value="baseline and differential"/>
</dbReference>
<dbReference type="GO" id="GO:0005634">
    <property type="term" value="C:nucleus"/>
    <property type="evidence" value="ECO:0000314"/>
    <property type="project" value="TAIR"/>
</dbReference>
<dbReference type="GO" id="GO:0003700">
    <property type="term" value="F:DNA-binding transcription factor activity"/>
    <property type="evidence" value="ECO:0000304"/>
    <property type="project" value="TAIR"/>
</dbReference>
<dbReference type="GO" id="GO:0030154">
    <property type="term" value="P:cell differentiation"/>
    <property type="evidence" value="ECO:0007669"/>
    <property type="project" value="UniProtKB-KW"/>
</dbReference>
<dbReference type="GO" id="GO:0009908">
    <property type="term" value="P:flower development"/>
    <property type="evidence" value="ECO:0000315"/>
    <property type="project" value="TAIR"/>
</dbReference>
<dbReference type="GO" id="GO:0009554">
    <property type="term" value="P:megasporogenesis"/>
    <property type="evidence" value="ECO:0000315"/>
    <property type="project" value="TAIR"/>
</dbReference>
<dbReference type="GO" id="GO:0046622">
    <property type="term" value="P:positive regulation of organ growth"/>
    <property type="evidence" value="ECO:0000315"/>
    <property type="project" value="TAIR"/>
</dbReference>
<dbReference type="GO" id="GO:0030163">
    <property type="term" value="P:protein catabolic process"/>
    <property type="evidence" value="ECO:0000315"/>
    <property type="project" value="TAIR"/>
</dbReference>
<dbReference type="FunFam" id="2.130.10.10:FF:002757">
    <property type="entry name" value="Transcriptional regulator STERILE APETALA"/>
    <property type="match status" value="1"/>
</dbReference>
<dbReference type="Gene3D" id="1.20.1280.50">
    <property type="match status" value="1"/>
</dbReference>
<dbReference type="Gene3D" id="2.130.10.10">
    <property type="entry name" value="YVTN repeat-like/Quinoprotein amine dehydrogenase"/>
    <property type="match status" value="1"/>
</dbReference>
<dbReference type="InterPro" id="IPR036047">
    <property type="entry name" value="F-box-like_dom_sf"/>
</dbReference>
<dbReference type="InterPro" id="IPR015943">
    <property type="entry name" value="WD40/YVTN_repeat-like_dom_sf"/>
</dbReference>
<dbReference type="InterPro" id="IPR036322">
    <property type="entry name" value="WD40_repeat_dom_sf"/>
</dbReference>
<dbReference type="PANTHER" id="PTHR19855:SF31">
    <property type="entry name" value="TRANSCRIPTIONAL REGULATOR STERILE APETALA"/>
    <property type="match status" value="1"/>
</dbReference>
<dbReference type="PANTHER" id="PTHR19855">
    <property type="entry name" value="WD40 REPEAT PROTEIN 12, 37"/>
    <property type="match status" value="1"/>
</dbReference>
<dbReference type="SUPFAM" id="SSF81383">
    <property type="entry name" value="F-box domain"/>
    <property type="match status" value="1"/>
</dbReference>
<dbReference type="SUPFAM" id="SSF50978">
    <property type="entry name" value="WD40 repeat-like"/>
    <property type="match status" value="1"/>
</dbReference>
<sequence length="446" mass="49306">MSTSSSSSDNGAGGSGGVFEAPSPSRPRRGANDVWPEPFLESLAVQVAVNASTSAGLLAAAPALANVFRVCTTWHAVSRSDHLWQLLSRQVWARTHLMHDTWRDEFIYRHRTARNFRTRTHTYFTLQFDPSDVDEPDSLSCRCLTLSDLYLAAGFADGTVRLFLLNNRLHVRTLRPPLRDRFGRFSRAVSGIVISDSRLTFATMDGDIHVAEIDGVGHTRTAYAGDIVNDGALVDFTGCGRWWVGLFAGVPGRAFHIWDCNSEETTFVGGTLTDPEAVMGWHTLTELTTSLGRLRISGNETAVACTRWRIMVIDLRNQGVIIGEDEEQRRGLIVTGFDANDEAYVRLDSRGNASVRRVNTQQTVCEFRVSGAAQRRVMGCVNRLHALMCAGGIMRVWEVERGEYLYSIRERVGEVDAIVADDRHVAVASASSTAQSIIHLWDFGAL</sequence>
<keyword id="KW-0217">Developmental protein</keyword>
<keyword id="KW-0221">Differentiation</keyword>
<keyword id="KW-0287">Flowering</keyword>
<keyword id="KW-0539">Nucleus</keyword>
<keyword id="KW-1185">Reference proteome</keyword>
<keyword id="KW-0678">Repressor</keyword>
<keyword id="KW-0804">Transcription</keyword>
<keyword id="KW-0805">Transcription regulation</keyword>
<name>SAP_ARATH</name>
<evidence type="ECO:0000256" key="1">
    <source>
        <dbReference type="SAM" id="MobiDB-lite"/>
    </source>
</evidence>
<evidence type="ECO:0000305" key="2"/>
<proteinExistence type="evidence at protein level"/>
<comment type="function">
    <text>Transcriptional regulator involved in the specification of floral identity. Acts as A class cadastral protein by repressing the C class floral homeotic gene AGAMOUS in the external flower organs in association with APETALA2 and other repressors. Is required to maintain floral meristem identity in concert with AGAMOUS. Also interacts with APETALA2 to ensure the normal development of ovule.</text>
</comment>
<comment type="subcellular location">
    <subcellularLocation>
        <location evidence="2">Nucleus</location>
    </subcellularLocation>
</comment>
<comment type="tissue specificity">
    <text>Expressed in inflorescence and floral meristems, young floral organ primordia, and later in ovule primordia.</text>
</comment>
<comment type="miscellaneous">
    <text>Mutations in the SAP gene result in the ectopic expression of AGAMOUS, leading to partial homeotic transformation of the external floral organs. Mutations affect equally ovule development and cause floral sterility.</text>
</comment>
<organism>
    <name type="scientific">Arabidopsis thaliana</name>
    <name type="common">Mouse-ear cress</name>
    <dbReference type="NCBI Taxonomy" id="3702"/>
    <lineage>
        <taxon>Eukaryota</taxon>
        <taxon>Viridiplantae</taxon>
        <taxon>Streptophyta</taxon>
        <taxon>Embryophyta</taxon>
        <taxon>Tracheophyta</taxon>
        <taxon>Spermatophyta</taxon>
        <taxon>Magnoliopsida</taxon>
        <taxon>eudicotyledons</taxon>
        <taxon>Gunneridae</taxon>
        <taxon>Pentapetalae</taxon>
        <taxon>rosids</taxon>
        <taxon>malvids</taxon>
        <taxon>Brassicales</taxon>
        <taxon>Brassicaceae</taxon>
        <taxon>Camelineae</taxon>
        <taxon>Arabidopsis</taxon>
    </lineage>
</organism>
<gene>
    <name type="primary">SAP</name>
    <name type="ordered locus">At5g35770</name>
    <name type="ORF">MXH1.20</name>
</gene>
<feature type="chain" id="PRO_0000097586" description="Transcriptional regulator STERILE APETALA">
    <location>
        <begin position="1"/>
        <end position="446"/>
    </location>
</feature>
<feature type="region of interest" description="Disordered" evidence="1">
    <location>
        <begin position="1"/>
        <end position="32"/>
    </location>
</feature>
<feature type="compositionally biased region" description="Low complexity" evidence="1">
    <location>
        <begin position="1"/>
        <end position="10"/>
    </location>
</feature>
<feature type="sequence conflict" description="In Ref. 1; CAA11128." evidence="2" ref="1">
    <original>H</original>
    <variation>L</variation>
    <location>
        <position position="75"/>
    </location>
</feature>
<feature type="sequence conflict" description="In Ref. 1; CAA11128." evidence="2" ref="1">
    <original>A</original>
    <variation>G</variation>
    <location>
        <position position="153"/>
    </location>
</feature>
<feature type="sequence conflict" description="In Ref. 1; CAA11128." evidence="2" ref="1">
    <original>Q</original>
    <variation>P</variation>
    <location>
        <position position="328"/>
    </location>
</feature>
<reference key="1">
    <citation type="journal article" date="1999" name="Genes Dev.">
        <title>Arabidopsis STERILE APETALA, a multifunctional gene regulating inflorescence, flower, and ovule development.</title>
        <authorList>
            <person name="Byzova M.V."/>
            <person name="Franken J."/>
            <person name="Aarts M.G.M."/>
            <person name="de Almeida-Engler J."/>
            <person name="Engler G."/>
            <person name="Mariani C."/>
            <person name="van Lookeren Campagne M.M."/>
            <person name="Angenent G.C."/>
        </authorList>
    </citation>
    <scope>NUCLEOTIDE SEQUENCE [MRNA]</scope>
    <scope>CHARACTERIZATION</scope>
    <source>
        <strain>cv. Landsberg erecta</strain>
        <tissue>Flower</tissue>
    </source>
</reference>
<reference key="2">
    <citation type="journal article" date="1998" name="DNA Res.">
        <title>Structural analysis of Arabidopsis thaliana chromosome 5. V. Sequence features of the regions of 1,381,565 bp covered by twenty one physically assigned P1 and TAC clones.</title>
        <authorList>
            <person name="Kaneko T."/>
            <person name="Kotani H."/>
            <person name="Nakamura Y."/>
            <person name="Sato S."/>
            <person name="Asamizu E."/>
            <person name="Miyajima N."/>
            <person name="Tabata S."/>
        </authorList>
    </citation>
    <scope>NUCLEOTIDE SEQUENCE [LARGE SCALE GENOMIC DNA]</scope>
    <source>
        <strain>cv. Columbia</strain>
    </source>
</reference>
<reference key="3">
    <citation type="journal article" date="2017" name="Plant J.">
        <title>Araport11: a complete reannotation of the Arabidopsis thaliana reference genome.</title>
        <authorList>
            <person name="Cheng C.Y."/>
            <person name="Krishnakumar V."/>
            <person name="Chan A.P."/>
            <person name="Thibaud-Nissen F."/>
            <person name="Schobel S."/>
            <person name="Town C.D."/>
        </authorList>
    </citation>
    <scope>GENOME REANNOTATION</scope>
    <source>
        <strain>cv. Columbia</strain>
    </source>
</reference>
<protein>
    <recommendedName>
        <fullName>Transcriptional regulator STERILE APETALA</fullName>
    </recommendedName>
</protein>